<evidence type="ECO:0000250" key="1"/>
<evidence type="ECO:0000255" key="2">
    <source>
        <dbReference type="PROSITE-ProRule" id="PRU00147"/>
    </source>
</evidence>
<evidence type="ECO:0000256" key="3">
    <source>
        <dbReference type="SAM" id="MobiDB-lite"/>
    </source>
</evidence>
<evidence type="ECO:0000305" key="4"/>
<proteinExistence type="evidence at transcript level"/>
<sequence length="200" mass="23522">MFPEQQKEEFVSVWVRDPRIQKEDFWHSYIDYEICIHTNSMCFTMKTSCVRRRYREFVWLRQRLQSNALLVQLPELPSKNLFFNMNNRQHVDQRRQGLEDFLRKVLQNALLLSDSSLHLFLQSHLNSEDIEACVSGQTKYSVEEAIHKFALMNRRFPEEEEGKKENDIDYDSESSSSGFGHSSDDSSSHGCKMSTAPQES</sequence>
<protein>
    <recommendedName>
        <fullName>Sorting nexin-10</fullName>
    </recommendedName>
</protein>
<dbReference type="EMBL" id="BC122586">
    <property type="protein sequence ID" value="AAI22587.1"/>
    <property type="molecule type" value="mRNA"/>
</dbReference>
<dbReference type="RefSeq" id="NP_001068843.1">
    <property type="nucleotide sequence ID" value="NM_001075375.1"/>
</dbReference>
<dbReference type="RefSeq" id="XP_005205585.1">
    <property type="nucleotide sequence ID" value="XM_005205528.3"/>
</dbReference>
<dbReference type="RefSeq" id="XP_005205586.1">
    <property type="nucleotide sequence ID" value="XM_005205529.4"/>
</dbReference>
<dbReference type="RefSeq" id="XP_005205588.1">
    <property type="nucleotide sequence ID" value="XM_005205531.5"/>
</dbReference>
<dbReference type="RefSeq" id="XP_024846335.1">
    <property type="nucleotide sequence ID" value="XM_024990567.2"/>
</dbReference>
<dbReference type="RefSeq" id="XP_059741467.1">
    <property type="nucleotide sequence ID" value="XM_059885484.1"/>
</dbReference>
<dbReference type="SMR" id="Q0IIL5"/>
<dbReference type="FunCoup" id="Q0IIL5">
    <property type="interactions" value="265"/>
</dbReference>
<dbReference type="STRING" id="9913.ENSBTAP00000002383"/>
<dbReference type="PaxDb" id="9913-ENSBTAP00000002383"/>
<dbReference type="Ensembl" id="ENSBTAT00000002383.7">
    <property type="protein sequence ID" value="ENSBTAP00000002383.5"/>
    <property type="gene ID" value="ENSBTAG00000001822.7"/>
</dbReference>
<dbReference type="GeneID" id="508836"/>
<dbReference type="KEGG" id="bta:508836"/>
<dbReference type="CTD" id="29887"/>
<dbReference type="VEuPathDB" id="HostDB:ENSBTAG00000001822"/>
<dbReference type="VGNC" id="VGNC:35091">
    <property type="gene designation" value="SNX10"/>
</dbReference>
<dbReference type="eggNOG" id="KOG2527">
    <property type="taxonomic scope" value="Eukaryota"/>
</dbReference>
<dbReference type="GeneTree" id="ENSGT00940000156007"/>
<dbReference type="HOGENOM" id="CLU_057172_4_0_1"/>
<dbReference type="InParanoid" id="Q0IIL5"/>
<dbReference type="OMA" id="SMLMVQL"/>
<dbReference type="OrthoDB" id="5227681at2759"/>
<dbReference type="TreeFam" id="TF332117"/>
<dbReference type="Proteomes" id="UP000009136">
    <property type="component" value="Chromosome 4"/>
</dbReference>
<dbReference type="Bgee" id="ENSBTAG00000001822">
    <property type="expression patterns" value="Expressed in monocyte and 106 other cell types or tissues"/>
</dbReference>
<dbReference type="GO" id="GO:0005813">
    <property type="term" value="C:centrosome"/>
    <property type="evidence" value="ECO:0007669"/>
    <property type="project" value="UniProtKB-SubCell"/>
</dbReference>
<dbReference type="GO" id="GO:0005783">
    <property type="term" value="C:endoplasmic reticulum"/>
    <property type="evidence" value="ECO:0000250"/>
    <property type="project" value="UniProtKB"/>
</dbReference>
<dbReference type="GO" id="GO:0005768">
    <property type="term" value="C:endosome"/>
    <property type="evidence" value="ECO:0000318"/>
    <property type="project" value="GO_Central"/>
</dbReference>
<dbReference type="GO" id="GO:0031313">
    <property type="term" value="C:extrinsic component of endosome membrane"/>
    <property type="evidence" value="ECO:0000250"/>
    <property type="project" value="UniProtKB"/>
</dbReference>
<dbReference type="GO" id="GO:0005634">
    <property type="term" value="C:nucleus"/>
    <property type="evidence" value="ECO:0000250"/>
    <property type="project" value="UniProtKB"/>
</dbReference>
<dbReference type="GO" id="GO:0005545">
    <property type="term" value="F:1-phosphatidylinositol binding"/>
    <property type="evidence" value="ECO:0000250"/>
    <property type="project" value="UniProtKB"/>
</dbReference>
<dbReference type="GO" id="GO:1901981">
    <property type="term" value="F:phosphatidylinositol phosphate binding"/>
    <property type="evidence" value="ECO:0000318"/>
    <property type="project" value="GO_Central"/>
</dbReference>
<dbReference type="GO" id="GO:0060271">
    <property type="term" value="P:cilium assembly"/>
    <property type="evidence" value="ECO:0000250"/>
    <property type="project" value="UniProtKB"/>
</dbReference>
<dbReference type="GO" id="GO:0007032">
    <property type="term" value="P:endosome organization"/>
    <property type="evidence" value="ECO:0000250"/>
    <property type="project" value="UniProtKB"/>
</dbReference>
<dbReference type="GO" id="GO:0006886">
    <property type="term" value="P:intracellular protein transport"/>
    <property type="evidence" value="ECO:0007669"/>
    <property type="project" value="InterPro"/>
</dbReference>
<dbReference type="GO" id="GO:0030316">
    <property type="term" value="P:osteoclast differentiation"/>
    <property type="evidence" value="ECO:0000250"/>
    <property type="project" value="UniProtKB"/>
</dbReference>
<dbReference type="GO" id="GO:0071539">
    <property type="term" value="P:protein localization to centrosome"/>
    <property type="evidence" value="ECO:0000250"/>
    <property type="project" value="UniProtKB"/>
</dbReference>
<dbReference type="GO" id="GO:0061512">
    <property type="term" value="P:protein localization to cilium"/>
    <property type="evidence" value="ECO:0000250"/>
    <property type="project" value="UniProtKB"/>
</dbReference>
<dbReference type="GO" id="GO:0016050">
    <property type="term" value="P:vesicle organization"/>
    <property type="evidence" value="ECO:0000318"/>
    <property type="project" value="GO_Central"/>
</dbReference>
<dbReference type="CDD" id="cd06898">
    <property type="entry name" value="PX_SNX10"/>
    <property type="match status" value="1"/>
</dbReference>
<dbReference type="FunFam" id="3.30.1520.10:FF:000012">
    <property type="entry name" value="Sorting nexin 10"/>
    <property type="match status" value="1"/>
</dbReference>
<dbReference type="Gene3D" id="3.30.1520.10">
    <property type="entry name" value="Phox-like domain"/>
    <property type="match status" value="1"/>
</dbReference>
<dbReference type="InterPro" id="IPR001683">
    <property type="entry name" value="PX_dom"/>
</dbReference>
<dbReference type="InterPro" id="IPR036871">
    <property type="entry name" value="PX_dom_sf"/>
</dbReference>
<dbReference type="InterPro" id="IPR043544">
    <property type="entry name" value="SNX10/11"/>
</dbReference>
<dbReference type="PANTHER" id="PTHR46209">
    <property type="entry name" value="PX DOMAIN-CONTAINING PROTEIN"/>
    <property type="match status" value="1"/>
</dbReference>
<dbReference type="PANTHER" id="PTHR46209:SF2">
    <property type="entry name" value="SORTING NEXIN-10"/>
    <property type="match status" value="1"/>
</dbReference>
<dbReference type="Pfam" id="PF00787">
    <property type="entry name" value="PX"/>
    <property type="match status" value="1"/>
</dbReference>
<dbReference type="SMART" id="SM00312">
    <property type="entry name" value="PX"/>
    <property type="match status" value="1"/>
</dbReference>
<dbReference type="SUPFAM" id="SSF64268">
    <property type="entry name" value="PX domain"/>
    <property type="match status" value="1"/>
</dbReference>
<dbReference type="PROSITE" id="PS50195">
    <property type="entry name" value="PX"/>
    <property type="match status" value="1"/>
</dbReference>
<keyword id="KW-0970">Cilium biogenesis/degradation</keyword>
<keyword id="KW-0963">Cytoplasm</keyword>
<keyword id="KW-0206">Cytoskeleton</keyword>
<keyword id="KW-0967">Endosome</keyword>
<keyword id="KW-0446">Lipid-binding</keyword>
<keyword id="KW-0472">Membrane</keyword>
<keyword id="KW-0653">Protein transport</keyword>
<keyword id="KW-1185">Reference proteome</keyword>
<keyword id="KW-0813">Transport</keyword>
<gene>
    <name type="primary">SNX10</name>
</gene>
<feature type="chain" id="PRO_0000290186" description="Sorting nexin-10">
    <location>
        <begin position="1"/>
        <end position="200"/>
    </location>
</feature>
<feature type="domain" description="PX" evidence="2">
    <location>
        <begin position="10"/>
        <end position="127"/>
    </location>
</feature>
<feature type="region of interest" description="Required for interaction with ATP6V1D" evidence="1">
    <location>
        <begin position="8"/>
        <end position="125"/>
    </location>
</feature>
<feature type="region of interest" description="Disordered" evidence="3">
    <location>
        <begin position="156"/>
        <end position="200"/>
    </location>
</feature>
<feature type="compositionally biased region" description="Basic and acidic residues" evidence="3">
    <location>
        <begin position="156"/>
        <end position="167"/>
    </location>
</feature>
<feature type="binding site" evidence="1">
    <location>
        <position position="53"/>
    </location>
    <ligand>
        <name>a 1,2-diacyl-sn-glycero-3-phospho-(1D-myo-inositol-3-phosphate)</name>
        <dbReference type="ChEBI" id="CHEBI:58088"/>
    </ligand>
</feature>
<feature type="binding site" evidence="1">
    <location>
        <position position="79"/>
    </location>
    <ligand>
        <name>a 1,2-diacyl-sn-glycero-3-phospho-(1D-myo-inositol-3-phosphate)</name>
        <dbReference type="ChEBI" id="CHEBI:58088"/>
    </ligand>
</feature>
<feature type="binding site" evidence="1">
    <location>
        <position position="94"/>
    </location>
    <ligand>
        <name>a 1,2-diacyl-sn-glycero-3-phospho-(1D-myo-inositol-3-phosphate)</name>
        <dbReference type="ChEBI" id="CHEBI:58088"/>
    </ligand>
</feature>
<organism>
    <name type="scientific">Bos taurus</name>
    <name type="common">Bovine</name>
    <dbReference type="NCBI Taxonomy" id="9913"/>
    <lineage>
        <taxon>Eukaryota</taxon>
        <taxon>Metazoa</taxon>
        <taxon>Chordata</taxon>
        <taxon>Craniata</taxon>
        <taxon>Vertebrata</taxon>
        <taxon>Euteleostomi</taxon>
        <taxon>Mammalia</taxon>
        <taxon>Eutheria</taxon>
        <taxon>Laurasiatheria</taxon>
        <taxon>Artiodactyla</taxon>
        <taxon>Ruminantia</taxon>
        <taxon>Pecora</taxon>
        <taxon>Bovidae</taxon>
        <taxon>Bovinae</taxon>
        <taxon>Bos</taxon>
    </lineage>
</organism>
<comment type="function">
    <text evidence="1">Probable phosphoinositide-binding protein involved in protein sorting and membrane trafficking in endosomes. Plays a role in cilium biogenesis through regulation of the transport and the localization of proteins to the cilium. Required for the localization to the cilium of V-ATPase subunit ATP6V1D and ATP6V0D1, and RAB8A. Involved in osteoclast differentiation and therefore bone resorption (By similarity).</text>
</comment>
<comment type="subunit">
    <text>Interacts with ATP6V1D; may play a role in ciliogenesis.</text>
</comment>
<comment type="subcellular location">
    <subcellularLocation>
        <location evidence="1">Cytoplasm</location>
    </subcellularLocation>
    <subcellularLocation>
        <location evidence="1">Endosome membrane</location>
        <topology evidence="1">Peripheral membrane protein</topology>
        <orientation evidence="1">Cytoplasmic side</orientation>
    </subcellularLocation>
    <subcellularLocation>
        <location evidence="1">Cytoplasm</location>
        <location evidence="1">Cytoskeleton</location>
        <location evidence="1">Microtubule organizing center</location>
        <location evidence="1">Centrosome</location>
    </subcellularLocation>
    <text evidence="1">May also localize to nucleus and endoplasmic reticulum.</text>
</comment>
<comment type="domain">
    <text evidence="1">The PX domain mediates interaction with membranes enriched in phosphatidylinositol 3-phosphate.</text>
</comment>
<comment type="similarity">
    <text evidence="4">Belongs to the sorting nexin family.</text>
</comment>
<accession>Q0IIL5</accession>
<reference key="1">
    <citation type="submission" date="2006-08" db="EMBL/GenBank/DDBJ databases">
        <authorList>
            <consortium name="NIH - Mammalian Gene Collection (MGC) project"/>
        </authorList>
    </citation>
    <scope>NUCLEOTIDE SEQUENCE [LARGE SCALE MRNA]</scope>
    <source>
        <strain>Hereford</strain>
        <tissue>Thalamus</tissue>
    </source>
</reference>
<name>SNX10_BOVIN</name>